<sequence>MSSEKSGLPDSVPHTSPPPYNAPQPPAEPPAPPPQAAPSSHHHHHHHYHQSGTATLPRLGAGGLASSAATAQRGPSSSATLPRPPHHAPPGPAAGAPPPGCATLPRMPPDPYLQETRFEGPLPPPPPAAAAPPPPAPAQTAQAPGFVVPTHAGTVGTLPLGGYVAPGYPLQLQPCTAYVPVYPVGTPYAGGTPGGTGVTSTLPPPPQGPGLALLEPRRPPHDYMPIAVLTTICCFWPTGIIAIFKAVQVRTALARGDMVSAEIASREARNFSFISLAVGIAAMVLCTILTVVIIIAAQHHENYWDP</sequence>
<organism>
    <name type="scientific">Homo sapiens</name>
    <name type="common">Human</name>
    <dbReference type="NCBI Taxonomy" id="9606"/>
    <lineage>
        <taxon>Eukaryota</taxon>
        <taxon>Metazoa</taxon>
        <taxon>Chordata</taxon>
        <taxon>Craniata</taxon>
        <taxon>Vertebrata</taxon>
        <taxon>Euteleostomi</taxon>
        <taxon>Mammalia</taxon>
        <taxon>Eutheria</taxon>
        <taxon>Euarchontoglires</taxon>
        <taxon>Primates</taxon>
        <taxon>Haplorrhini</taxon>
        <taxon>Catarrhini</taxon>
        <taxon>Hominidae</taxon>
        <taxon>Homo</taxon>
    </lineage>
</organism>
<comment type="function">
    <text evidence="2">Required to maintain a pool of extrasynaptic AMPA-regulated glutamate receptors (AMPAR) which is necessary for synapse development and function. Regulates basal AMPAR function and synaptic transmission during development but is dispensable at mature hippocampal synapses. Plays a role in regulating basal phosphorylation levels of glutamate receptor GRIA1 and promotes GRIA1 and GRIA2 cell surface expression.</text>
</comment>
<comment type="subunit">
    <text evidence="1">Component of the outer core of AMPAR complex. AMPAR complex consists of an inner core made of 4 pore-forming GluA/GRIA proteins (GRIA1, GRIA2, GRIA3 and GRIA4) and 4 major auxiliary subunits arranged in a twofold symmetry. One of the two pairs of distinct binding sites is occupied either by CNIH2, CNIH3 or CACNG2, CACNG3. The other harbors CACNG2, CACNG3, CACNG4, CACNG8 or GSG1L. This inner core of AMPAR complex is complemented by outer core constituents binding directly to the GluA/GRIA proteins at sites distinct from the interaction sites of the inner core constituents. Outer core constituents include at least PRRT1, PRRT2, CKAMP44/SHISA9, FRRS1L and NRN1. The proteins of the inner and outer core serve as a platform for other, more peripherally associated AMPAR constituents. Alone or in combination, these auxiliary subunits control the gating and pharmacology of the AMPAR complex and profoundly impact their biogenesis and protein processing (By similarity).</text>
</comment>
<comment type="interaction">
    <interactant intactId="EBI-12211089">
        <id>Q99946-2</id>
    </interactant>
    <interactant intactId="EBI-3932027">
        <id>P21145</id>
        <label>MAL</label>
    </interactant>
    <organismsDiffer>false</organismsDiffer>
    <experiments>3</experiments>
</comment>
<comment type="interaction">
    <interactant intactId="EBI-12211089">
        <id>Q99946-2</id>
    </interactant>
    <interactant intactId="EBI-12211089">
        <id>Q99946-2</id>
        <label>PRRT1</label>
    </interactant>
    <organismsDiffer>false</organismsDiffer>
    <experiments>3</experiments>
</comment>
<comment type="subcellular location">
    <subcellularLocation>
        <location evidence="3">Cell membrane</location>
        <topology evidence="3">Single-pass type II membrane protein</topology>
    </subcellularLocation>
    <subcellularLocation>
        <location evidence="3">Synapse</location>
    </subcellularLocation>
</comment>
<comment type="alternative products">
    <event type="alternative splicing"/>
    <isoform>
        <id>Q99946-1</id>
        <name>1</name>
        <sequence type="displayed"/>
    </isoform>
    <isoform>
        <id>Q99946-2</id>
        <name>2</name>
        <sequence type="described" ref="VSP_003808"/>
    </isoform>
</comment>
<comment type="similarity">
    <text evidence="8">Belongs to the CD225/Dispanin family.</text>
</comment>
<proteinExistence type="evidence at protein level"/>
<gene>
    <name evidence="9" type="primary">PRRT1</name>
    <name evidence="9" type="synonym">C6orf31</name>
    <name evidence="3" type="synonym">NG5</name>
</gene>
<accession>Q99946</accession>
<accession>A6ND08</accession>
<accession>A6ND40</accession>
<accession>B0S869</accession>
<accession>Q5SSW4</accession>
<accession>Q5SSX7</accession>
<accession>Q5STI1</accession>
<accession>Q96DW3</accession>
<accession>Q96NQ8</accession>
<evidence type="ECO:0000250" key="1"/>
<evidence type="ECO:0000250" key="2">
    <source>
        <dbReference type="UniProtKB" id="O35449"/>
    </source>
</evidence>
<evidence type="ECO:0000250" key="3">
    <source>
        <dbReference type="UniProtKB" id="Q6MG82"/>
    </source>
</evidence>
<evidence type="ECO:0000255" key="4"/>
<evidence type="ECO:0000256" key="5">
    <source>
        <dbReference type="SAM" id="MobiDB-lite"/>
    </source>
</evidence>
<evidence type="ECO:0000269" key="6">
    <source>
    </source>
</evidence>
<evidence type="ECO:0000303" key="7">
    <source>
    </source>
</evidence>
<evidence type="ECO:0000305" key="8"/>
<evidence type="ECO:0000312" key="9">
    <source>
        <dbReference type="HGNC" id="HGNC:13943"/>
    </source>
</evidence>
<dbReference type="EMBL" id="AK054885">
    <property type="protein sequence ID" value="BAB70821.1"/>
    <property type="molecule type" value="mRNA"/>
</dbReference>
<dbReference type="EMBL" id="U89336">
    <property type="protein sequence ID" value="AAB47496.1"/>
    <property type="molecule type" value="Genomic_DNA"/>
</dbReference>
<dbReference type="EMBL" id="AL662828">
    <property type="status" value="NOT_ANNOTATED_CDS"/>
    <property type="molecule type" value="Genomic_DNA"/>
</dbReference>
<dbReference type="EMBL" id="AL662884">
    <property type="status" value="NOT_ANNOTATED_CDS"/>
    <property type="molecule type" value="Genomic_DNA"/>
</dbReference>
<dbReference type="EMBL" id="AL845464">
    <property type="status" value="NOT_ANNOTATED_CDS"/>
    <property type="molecule type" value="Genomic_DNA"/>
</dbReference>
<dbReference type="EMBL" id="BX284686">
    <property type="status" value="NOT_ANNOTATED_CDS"/>
    <property type="molecule type" value="Genomic_DNA"/>
</dbReference>
<dbReference type="EMBL" id="BX927239">
    <property type="status" value="NOT_ANNOTATED_CDS"/>
    <property type="molecule type" value="Genomic_DNA"/>
</dbReference>
<dbReference type="EMBL" id="CR753803">
    <property type="status" value="NOT_ANNOTATED_CDS"/>
    <property type="molecule type" value="Genomic_DNA"/>
</dbReference>
<dbReference type="EMBL" id="CR933878">
    <property type="status" value="NOT_ANNOTATED_CDS"/>
    <property type="molecule type" value="Genomic_DNA"/>
</dbReference>
<dbReference type="EMBL" id="CR812478">
    <property type="status" value="NOT_ANNOTATED_CDS"/>
    <property type="molecule type" value="Genomic_DNA"/>
</dbReference>
<dbReference type="EMBL" id="CH471081">
    <property type="protein sequence ID" value="EAX03589.1"/>
    <property type="molecule type" value="Genomic_DNA"/>
</dbReference>
<dbReference type="EMBL" id="BC013201">
    <property type="protein sequence ID" value="AAH13201.1"/>
    <property type="molecule type" value="mRNA"/>
</dbReference>
<dbReference type="EMBL" id="BC063046">
    <property type="protein sequence ID" value="AAH63046.1"/>
    <property type="molecule type" value="mRNA"/>
</dbReference>
<dbReference type="CCDS" id="CCDS4739.1">
    <molecule id="Q99946-1"/>
</dbReference>
<dbReference type="RefSeq" id="NP_001350709.1">
    <molecule id="Q99946-2"/>
    <property type="nucleotide sequence ID" value="NM_001363780.2"/>
</dbReference>
<dbReference type="RefSeq" id="NP_085154.3">
    <molecule id="Q99946-1"/>
    <property type="nucleotide sequence ID" value="NM_030651.3"/>
</dbReference>
<dbReference type="BioGRID" id="123335">
    <property type="interactions" value="8"/>
</dbReference>
<dbReference type="FunCoup" id="Q99946">
    <property type="interactions" value="138"/>
</dbReference>
<dbReference type="IntAct" id="Q99946">
    <property type="interactions" value="4"/>
</dbReference>
<dbReference type="STRING" id="9606.ENSP00000211413"/>
<dbReference type="GlyGen" id="Q99946">
    <property type="glycosylation" value="1 site"/>
</dbReference>
<dbReference type="PhosphoSitePlus" id="Q99946"/>
<dbReference type="BioMuta" id="PRRT1"/>
<dbReference type="DMDM" id="23821870"/>
<dbReference type="MassIVE" id="Q99946"/>
<dbReference type="PaxDb" id="9606-ENSP00000211413"/>
<dbReference type="PeptideAtlas" id="Q99946"/>
<dbReference type="ProteomicsDB" id="78536">
    <molecule id="Q99946-1"/>
</dbReference>
<dbReference type="ProteomicsDB" id="78537">
    <molecule id="Q99946-2"/>
</dbReference>
<dbReference type="ABCD" id="Q99946">
    <property type="antibodies" value="1 sequenced antibody"/>
</dbReference>
<dbReference type="Antibodypedia" id="61533">
    <property type="antibodies" value="86 antibodies from 19 providers"/>
</dbReference>
<dbReference type="DNASU" id="80863"/>
<dbReference type="Ensembl" id="ENST00000211413.10">
    <molecule id="Q99946-1"/>
    <property type="protein sequence ID" value="ENSP00000211413.5"/>
    <property type="gene ID" value="ENSG00000204314.12"/>
</dbReference>
<dbReference type="Ensembl" id="ENST00000383309.6">
    <molecule id="Q99946-2"/>
    <property type="protein sequence ID" value="ENSP00000372799.2"/>
    <property type="gene ID" value="ENSG00000206331.11"/>
</dbReference>
<dbReference type="Ensembl" id="ENST00000414687.6">
    <molecule id="Q99946-1"/>
    <property type="protein sequence ID" value="ENSP00000414711.2"/>
    <property type="gene ID" value="ENSG00000235956.9"/>
</dbReference>
<dbReference type="Ensembl" id="ENST00000418753.5">
    <molecule id="Q99946-2"/>
    <property type="protein sequence ID" value="ENSP00000411544.1"/>
    <property type="gene ID" value="ENSG00000225141.9"/>
</dbReference>
<dbReference type="Ensembl" id="ENST00000419655.6">
    <molecule id="Q99946-1"/>
    <property type="protein sequence ID" value="ENSP00000396427.2"/>
    <property type="gene ID" value="ENSG00000229071.9"/>
</dbReference>
<dbReference type="Ensembl" id="ENST00000423671.5">
    <molecule id="Q99946-2"/>
    <property type="protein sequence ID" value="ENSP00000411183.1"/>
    <property type="gene ID" value="ENSG00000229071.9"/>
</dbReference>
<dbReference type="Ensembl" id="ENST00000425739.5">
    <molecule id="Q99946-2"/>
    <property type="protein sequence ID" value="ENSP00000416064.1"/>
    <property type="gene ID" value="ENSG00000229488.9"/>
</dbReference>
<dbReference type="Ensembl" id="ENST00000441129.5">
    <molecule id="Q99946-2"/>
    <property type="protein sequence ID" value="ENSP00000411596.1"/>
    <property type="gene ID" value="ENSG00000227122.9"/>
</dbReference>
<dbReference type="Ensembl" id="ENST00000444466.6">
    <molecule id="Q99946-1"/>
    <property type="protein sequence ID" value="ENSP00000405389.2"/>
    <property type="gene ID" value="ENSG00000225141.9"/>
</dbReference>
<dbReference type="Ensembl" id="ENST00000445122.5">
    <molecule id="Q99946-2"/>
    <property type="protein sequence ID" value="ENSP00000396426.1"/>
    <property type="gene ID" value="ENSG00000238056.9"/>
</dbReference>
<dbReference type="Ensembl" id="ENST00000451329.6">
    <molecule id="Q99946-1"/>
    <property type="protein sequence ID" value="ENSP00000398756.2"/>
    <property type="gene ID" value="ENSG00000238056.9"/>
</dbReference>
<dbReference type="Ensembl" id="ENST00000452030.5">
    <molecule id="Q99946-2"/>
    <property type="protein sequence ID" value="ENSP00000394808.1"/>
    <property type="gene ID" value="ENSG00000235956.9"/>
</dbReference>
<dbReference type="Ensembl" id="ENST00000454112.6">
    <molecule id="Q99946-1"/>
    <property type="protein sequence ID" value="ENSP00000389058.2"/>
    <property type="gene ID" value="ENSG00000206331.11"/>
</dbReference>
<dbReference type="Ensembl" id="ENST00000456814.6">
    <molecule id="Q99946-1"/>
    <property type="protein sequence ID" value="ENSP00000397896.2"/>
    <property type="gene ID" value="ENSG00000229488.9"/>
</dbReference>
<dbReference type="Ensembl" id="ENST00000458719.6">
    <molecule id="Q99946-1"/>
    <property type="protein sequence ID" value="ENSP00000398252.2"/>
    <property type="gene ID" value="ENSG00000227122.9"/>
</dbReference>
<dbReference type="GeneID" id="80863"/>
<dbReference type="KEGG" id="hsa:80863"/>
<dbReference type="MANE-Select" id="ENST00000211413.10">
    <property type="protein sequence ID" value="ENSP00000211413.5"/>
    <property type="RefSeq nucleotide sequence ID" value="NM_030651.4"/>
    <property type="RefSeq protein sequence ID" value="NP_085154.3"/>
</dbReference>
<dbReference type="UCSC" id="uc003nzt.4">
    <molecule id="Q99946-1"/>
    <property type="organism name" value="human"/>
</dbReference>
<dbReference type="AGR" id="HGNC:13943"/>
<dbReference type="CTD" id="80863"/>
<dbReference type="DisGeNET" id="80863"/>
<dbReference type="GeneCards" id="PRRT1"/>
<dbReference type="HGNC" id="HGNC:13943">
    <property type="gene designation" value="PRRT1"/>
</dbReference>
<dbReference type="HPA" id="ENSG00000204314">
    <property type="expression patterns" value="Tissue enriched (brain)"/>
</dbReference>
<dbReference type="MIM" id="618297">
    <property type="type" value="gene"/>
</dbReference>
<dbReference type="neXtProt" id="NX_Q99946"/>
<dbReference type="OpenTargets" id="ENSG00000204314"/>
<dbReference type="PharmGKB" id="PA25932"/>
<dbReference type="VEuPathDB" id="HostDB:ENSG00000204314"/>
<dbReference type="eggNOG" id="ENOG502QWCK">
    <property type="taxonomic scope" value="Eukaryota"/>
</dbReference>
<dbReference type="GeneTree" id="ENSGT00940000162382"/>
<dbReference type="HOGENOM" id="CLU_096299_0_0_1"/>
<dbReference type="InParanoid" id="Q99946"/>
<dbReference type="OMA" id="PYNNPLQ"/>
<dbReference type="OrthoDB" id="5989578at2759"/>
<dbReference type="PAN-GO" id="Q99946">
    <property type="GO annotations" value="1 GO annotation based on evolutionary models"/>
</dbReference>
<dbReference type="PhylomeDB" id="Q99946"/>
<dbReference type="TreeFam" id="TF331357"/>
<dbReference type="PathwayCommons" id="Q99946"/>
<dbReference type="SignaLink" id="Q99946"/>
<dbReference type="BioGRID-ORCS" id="80863">
    <property type="hits" value="7 hits in 1147 CRISPR screens"/>
</dbReference>
<dbReference type="CD-CODE" id="FB4E32DD">
    <property type="entry name" value="Presynaptic clusters and postsynaptic densities"/>
</dbReference>
<dbReference type="ChiTaRS" id="PRRT1">
    <property type="organism name" value="human"/>
</dbReference>
<dbReference type="GenomeRNAi" id="80863"/>
<dbReference type="Pharos" id="Q99946">
    <property type="development level" value="Tbio"/>
</dbReference>
<dbReference type="PRO" id="PR:Q99946"/>
<dbReference type="Proteomes" id="UP000005640">
    <property type="component" value="Chromosome 6"/>
</dbReference>
<dbReference type="RNAct" id="Q99946">
    <property type="molecule type" value="protein"/>
</dbReference>
<dbReference type="Bgee" id="ENSG00000204314">
    <property type="expression patterns" value="Expressed in right hemisphere of cerebellum and 93 other cell types or tissues"/>
</dbReference>
<dbReference type="ExpressionAtlas" id="Q99946">
    <property type="expression patterns" value="baseline and differential"/>
</dbReference>
<dbReference type="GO" id="GO:0098978">
    <property type="term" value="C:glutamatergic synapse"/>
    <property type="evidence" value="ECO:0007669"/>
    <property type="project" value="Ensembl"/>
</dbReference>
<dbReference type="GO" id="GO:0016020">
    <property type="term" value="C:membrane"/>
    <property type="evidence" value="ECO:0000318"/>
    <property type="project" value="GO_Central"/>
</dbReference>
<dbReference type="GO" id="GO:0098839">
    <property type="term" value="C:postsynaptic density membrane"/>
    <property type="evidence" value="ECO:0007669"/>
    <property type="project" value="Ensembl"/>
</dbReference>
<dbReference type="GO" id="GO:0030672">
    <property type="term" value="C:synaptic vesicle membrane"/>
    <property type="evidence" value="ECO:0007669"/>
    <property type="project" value="Ensembl"/>
</dbReference>
<dbReference type="GO" id="GO:0042802">
    <property type="term" value="F:identical protein binding"/>
    <property type="evidence" value="ECO:0000353"/>
    <property type="project" value="IntAct"/>
</dbReference>
<dbReference type="GO" id="GO:0030545">
    <property type="term" value="F:signaling receptor regulator activity"/>
    <property type="evidence" value="ECO:0007669"/>
    <property type="project" value="Ensembl"/>
</dbReference>
<dbReference type="GO" id="GO:0007611">
    <property type="term" value="P:learning or memory"/>
    <property type="evidence" value="ECO:0007669"/>
    <property type="project" value="Ensembl"/>
</dbReference>
<dbReference type="GO" id="GO:0060292">
    <property type="term" value="P:long-term synaptic depression"/>
    <property type="evidence" value="ECO:0000250"/>
    <property type="project" value="UniProtKB"/>
</dbReference>
<dbReference type="GO" id="GO:0060291">
    <property type="term" value="P:long-term synaptic potentiation"/>
    <property type="evidence" value="ECO:0007669"/>
    <property type="project" value="Ensembl"/>
</dbReference>
<dbReference type="GO" id="GO:0034394">
    <property type="term" value="P:protein localization to cell surface"/>
    <property type="evidence" value="ECO:0000250"/>
    <property type="project" value="UniProtKB"/>
</dbReference>
<dbReference type="GO" id="GO:0006468">
    <property type="term" value="P:protein phosphorylation"/>
    <property type="evidence" value="ECO:0000250"/>
    <property type="project" value="UniProtKB"/>
</dbReference>
<dbReference type="GO" id="GO:2000311">
    <property type="term" value="P:regulation of AMPA receptor activity"/>
    <property type="evidence" value="ECO:0000250"/>
    <property type="project" value="UniProtKB"/>
</dbReference>
<dbReference type="GO" id="GO:0050808">
    <property type="term" value="P:synapse organization"/>
    <property type="evidence" value="ECO:0007669"/>
    <property type="project" value="Ensembl"/>
</dbReference>
<dbReference type="InterPro" id="IPR051423">
    <property type="entry name" value="CD225/Dispanin"/>
</dbReference>
<dbReference type="InterPro" id="IPR007593">
    <property type="entry name" value="CD225/Dispanin_fam"/>
</dbReference>
<dbReference type="PANTHER" id="PTHR14948">
    <property type="entry name" value="NG5"/>
    <property type="match status" value="1"/>
</dbReference>
<dbReference type="PANTHER" id="PTHR14948:SF21">
    <property type="entry name" value="PROLINE-RICH TRANSMEMBRANE PROTEIN 1"/>
    <property type="match status" value="1"/>
</dbReference>
<dbReference type="Pfam" id="PF04505">
    <property type="entry name" value="CD225"/>
    <property type="match status" value="1"/>
</dbReference>
<feature type="chain" id="PRO_0000135697" description="Proline-rich transmembrane protein 1">
    <location>
        <begin position="1"/>
        <end position="306"/>
    </location>
</feature>
<feature type="topological domain" description="Cytoplasmic" evidence="3">
    <location>
        <begin position="1"/>
        <end position="223"/>
    </location>
</feature>
<feature type="transmembrane region" description="Helical" evidence="4">
    <location>
        <begin position="224"/>
        <end position="244"/>
    </location>
</feature>
<feature type="topological domain" description="Extracellular" evidence="3">
    <location>
        <begin position="245"/>
        <end position="275"/>
    </location>
</feature>
<feature type="intramembrane region" description="Helical" evidence="4">
    <location>
        <begin position="276"/>
        <end position="296"/>
    </location>
</feature>
<feature type="topological domain" description="Extracellular" evidence="3">
    <location>
        <begin position="297"/>
        <end position="306"/>
    </location>
</feature>
<feature type="region of interest" description="Disordered" evidence="5">
    <location>
        <begin position="1"/>
        <end position="142"/>
    </location>
</feature>
<feature type="compositionally biased region" description="Pro residues" evidence="5">
    <location>
        <begin position="15"/>
        <end position="36"/>
    </location>
</feature>
<feature type="compositionally biased region" description="Basic residues" evidence="5">
    <location>
        <begin position="40"/>
        <end position="49"/>
    </location>
</feature>
<feature type="compositionally biased region" description="Pro residues" evidence="5">
    <location>
        <begin position="87"/>
        <end position="111"/>
    </location>
</feature>
<feature type="compositionally biased region" description="Pro residues" evidence="5">
    <location>
        <begin position="121"/>
        <end position="137"/>
    </location>
</feature>
<feature type="splice variant" id="VSP_003808" description="In isoform 2." evidence="7">
    <original>MSSEKSGLPDSVPHTSPPPYNAPQPPAEPPAPPPQAAPSSHHHHHHHYHQSGTATLPRLGAGGLASSAATAQRGPSSSATLPRPPHHAPPGPAAGAPPPGCATLPRMPPDPYL</original>
    <variation>MPGTQTPAPAEDPHSGCRDPVPARPQACHPKS</variation>
    <location>
        <begin position="1"/>
        <end position="113"/>
    </location>
</feature>
<feature type="sequence variant" id="VAR_036212" description="In a breast cancer sample; somatic mutation; dbSNP:rs1427187570." evidence="6">
    <original>A</original>
    <variation>T</variation>
    <location>
        <position position="94"/>
    </location>
</feature>
<feature type="sequence conflict" description="In Ref. 1; BAB70821." evidence="8" ref="1">
    <original>Y</original>
    <variation>F</variation>
    <location>
        <position position="20"/>
    </location>
</feature>
<feature type="sequence conflict" description="In Ref. 1; BAB70821." evidence="8" ref="1">
    <original>H</original>
    <variation>Y</variation>
    <location>
        <position position="47"/>
    </location>
</feature>
<reference key="1">
    <citation type="journal article" date="2004" name="Nat. Genet.">
        <title>Complete sequencing and characterization of 21,243 full-length human cDNAs.</title>
        <authorList>
            <person name="Ota T."/>
            <person name="Suzuki Y."/>
            <person name="Nishikawa T."/>
            <person name="Otsuki T."/>
            <person name="Sugiyama T."/>
            <person name="Irie R."/>
            <person name="Wakamatsu A."/>
            <person name="Hayashi K."/>
            <person name="Sato H."/>
            <person name="Nagai K."/>
            <person name="Kimura K."/>
            <person name="Makita H."/>
            <person name="Sekine M."/>
            <person name="Obayashi M."/>
            <person name="Nishi T."/>
            <person name="Shibahara T."/>
            <person name="Tanaka T."/>
            <person name="Ishii S."/>
            <person name="Yamamoto J."/>
            <person name="Saito K."/>
            <person name="Kawai Y."/>
            <person name="Isono Y."/>
            <person name="Nakamura Y."/>
            <person name="Nagahari K."/>
            <person name="Murakami K."/>
            <person name="Yasuda T."/>
            <person name="Iwayanagi T."/>
            <person name="Wagatsuma M."/>
            <person name="Shiratori A."/>
            <person name="Sudo H."/>
            <person name="Hosoiri T."/>
            <person name="Kaku Y."/>
            <person name="Kodaira H."/>
            <person name="Kondo H."/>
            <person name="Sugawara M."/>
            <person name="Takahashi M."/>
            <person name="Kanda K."/>
            <person name="Yokoi T."/>
            <person name="Furuya T."/>
            <person name="Kikkawa E."/>
            <person name="Omura Y."/>
            <person name="Abe K."/>
            <person name="Kamihara K."/>
            <person name="Katsuta N."/>
            <person name="Sato K."/>
            <person name="Tanikawa M."/>
            <person name="Yamazaki M."/>
            <person name="Ninomiya K."/>
            <person name="Ishibashi T."/>
            <person name="Yamashita H."/>
            <person name="Murakawa K."/>
            <person name="Fujimori K."/>
            <person name="Tanai H."/>
            <person name="Kimata M."/>
            <person name="Watanabe M."/>
            <person name="Hiraoka S."/>
            <person name="Chiba Y."/>
            <person name="Ishida S."/>
            <person name="Ono Y."/>
            <person name="Takiguchi S."/>
            <person name="Watanabe S."/>
            <person name="Yosida M."/>
            <person name="Hotuta T."/>
            <person name="Kusano J."/>
            <person name="Kanehori K."/>
            <person name="Takahashi-Fujii A."/>
            <person name="Hara H."/>
            <person name="Tanase T.-O."/>
            <person name="Nomura Y."/>
            <person name="Togiya S."/>
            <person name="Komai F."/>
            <person name="Hara R."/>
            <person name="Takeuchi K."/>
            <person name="Arita M."/>
            <person name="Imose N."/>
            <person name="Musashino K."/>
            <person name="Yuuki H."/>
            <person name="Oshima A."/>
            <person name="Sasaki N."/>
            <person name="Aotsuka S."/>
            <person name="Yoshikawa Y."/>
            <person name="Matsunawa H."/>
            <person name="Ichihara T."/>
            <person name="Shiohata N."/>
            <person name="Sano S."/>
            <person name="Moriya S."/>
            <person name="Momiyama H."/>
            <person name="Satoh N."/>
            <person name="Takami S."/>
            <person name="Terashima Y."/>
            <person name="Suzuki O."/>
            <person name="Nakagawa S."/>
            <person name="Senoh A."/>
            <person name="Mizoguchi H."/>
            <person name="Goto Y."/>
            <person name="Shimizu F."/>
            <person name="Wakebe H."/>
            <person name="Hishigaki H."/>
            <person name="Watanabe T."/>
            <person name="Sugiyama A."/>
            <person name="Takemoto M."/>
            <person name="Kawakami B."/>
            <person name="Yamazaki M."/>
            <person name="Watanabe K."/>
            <person name="Kumagai A."/>
            <person name="Itakura S."/>
            <person name="Fukuzumi Y."/>
            <person name="Fujimori Y."/>
            <person name="Komiyama M."/>
            <person name="Tashiro H."/>
            <person name="Tanigami A."/>
            <person name="Fujiwara T."/>
            <person name="Ono T."/>
            <person name="Yamada K."/>
            <person name="Fujii Y."/>
            <person name="Ozaki K."/>
            <person name="Hirao M."/>
            <person name="Ohmori Y."/>
            <person name="Kawabata A."/>
            <person name="Hikiji T."/>
            <person name="Kobatake N."/>
            <person name="Inagaki H."/>
            <person name="Ikema Y."/>
            <person name="Okamoto S."/>
            <person name="Okitani R."/>
            <person name="Kawakami T."/>
            <person name="Noguchi S."/>
            <person name="Itoh T."/>
            <person name="Shigeta K."/>
            <person name="Senba T."/>
            <person name="Matsumura K."/>
            <person name="Nakajima Y."/>
            <person name="Mizuno T."/>
            <person name="Morinaga M."/>
            <person name="Sasaki M."/>
            <person name="Togashi T."/>
            <person name="Oyama M."/>
            <person name="Hata H."/>
            <person name="Watanabe M."/>
            <person name="Komatsu T."/>
            <person name="Mizushima-Sugano J."/>
            <person name="Satoh T."/>
            <person name="Shirai Y."/>
            <person name="Takahashi Y."/>
            <person name="Nakagawa K."/>
            <person name="Okumura K."/>
            <person name="Nagase T."/>
            <person name="Nomura N."/>
            <person name="Kikuchi H."/>
            <person name="Masuho Y."/>
            <person name="Yamashita R."/>
            <person name="Nakai K."/>
            <person name="Yada T."/>
            <person name="Nakamura Y."/>
            <person name="Ohara O."/>
            <person name="Isogai T."/>
            <person name="Sugano S."/>
        </authorList>
    </citation>
    <scope>NUCLEOTIDE SEQUENCE [LARGE SCALE MRNA] (ISOFORM 1)</scope>
    <source>
        <tissue>Cerebellum</tissue>
    </source>
</reference>
<reference key="2">
    <citation type="journal article" date="2003" name="Genome Res.">
        <title>Analysis of the gene-dense major histocompatibility complex class III region and its comparison to mouse.</title>
        <authorList>
            <person name="Xie T."/>
            <person name="Rowen L."/>
            <person name="Aguado B."/>
            <person name="Ahearn M.E."/>
            <person name="Madan A."/>
            <person name="Qin S."/>
            <person name="Campbell R.D."/>
            <person name="Hood L."/>
        </authorList>
    </citation>
    <scope>NUCLEOTIDE SEQUENCE [LARGE SCALE GENOMIC DNA]</scope>
</reference>
<reference key="3">
    <citation type="journal article" date="2003" name="Nature">
        <title>The DNA sequence and analysis of human chromosome 6.</title>
        <authorList>
            <person name="Mungall A.J."/>
            <person name="Palmer S.A."/>
            <person name="Sims S.K."/>
            <person name="Edwards C.A."/>
            <person name="Ashurst J.L."/>
            <person name="Wilming L."/>
            <person name="Jones M.C."/>
            <person name="Horton R."/>
            <person name="Hunt S.E."/>
            <person name="Scott C.E."/>
            <person name="Gilbert J.G.R."/>
            <person name="Clamp M.E."/>
            <person name="Bethel G."/>
            <person name="Milne S."/>
            <person name="Ainscough R."/>
            <person name="Almeida J.P."/>
            <person name="Ambrose K.D."/>
            <person name="Andrews T.D."/>
            <person name="Ashwell R.I.S."/>
            <person name="Babbage A.K."/>
            <person name="Bagguley C.L."/>
            <person name="Bailey J."/>
            <person name="Banerjee R."/>
            <person name="Barker D.J."/>
            <person name="Barlow K.F."/>
            <person name="Bates K."/>
            <person name="Beare D.M."/>
            <person name="Beasley H."/>
            <person name="Beasley O."/>
            <person name="Bird C.P."/>
            <person name="Blakey S.E."/>
            <person name="Bray-Allen S."/>
            <person name="Brook J."/>
            <person name="Brown A.J."/>
            <person name="Brown J.Y."/>
            <person name="Burford D.C."/>
            <person name="Burrill W."/>
            <person name="Burton J."/>
            <person name="Carder C."/>
            <person name="Carter N.P."/>
            <person name="Chapman J.C."/>
            <person name="Clark S.Y."/>
            <person name="Clark G."/>
            <person name="Clee C.M."/>
            <person name="Clegg S."/>
            <person name="Cobley V."/>
            <person name="Collier R.E."/>
            <person name="Collins J.E."/>
            <person name="Colman L.K."/>
            <person name="Corby N.R."/>
            <person name="Coville G.J."/>
            <person name="Culley K.M."/>
            <person name="Dhami P."/>
            <person name="Davies J."/>
            <person name="Dunn M."/>
            <person name="Earthrowl M.E."/>
            <person name="Ellington A.E."/>
            <person name="Evans K.A."/>
            <person name="Faulkner L."/>
            <person name="Francis M.D."/>
            <person name="Frankish A."/>
            <person name="Frankland J."/>
            <person name="French L."/>
            <person name="Garner P."/>
            <person name="Garnett J."/>
            <person name="Ghori M.J."/>
            <person name="Gilby L.M."/>
            <person name="Gillson C.J."/>
            <person name="Glithero R.J."/>
            <person name="Grafham D.V."/>
            <person name="Grant M."/>
            <person name="Gribble S."/>
            <person name="Griffiths C."/>
            <person name="Griffiths M.N.D."/>
            <person name="Hall R."/>
            <person name="Halls K.S."/>
            <person name="Hammond S."/>
            <person name="Harley J.L."/>
            <person name="Hart E.A."/>
            <person name="Heath P.D."/>
            <person name="Heathcott R."/>
            <person name="Holmes S.J."/>
            <person name="Howden P.J."/>
            <person name="Howe K.L."/>
            <person name="Howell G.R."/>
            <person name="Huckle E."/>
            <person name="Humphray S.J."/>
            <person name="Humphries M.D."/>
            <person name="Hunt A.R."/>
            <person name="Johnson C.M."/>
            <person name="Joy A.A."/>
            <person name="Kay M."/>
            <person name="Keenan S.J."/>
            <person name="Kimberley A.M."/>
            <person name="King A."/>
            <person name="Laird G.K."/>
            <person name="Langford C."/>
            <person name="Lawlor S."/>
            <person name="Leongamornlert D.A."/>
            <person name="Leversha M."/>
            <person name="Lloyd C.R."/>
            <person name="Lloyd D.M."/>
            <person name="Loveland J.E."/>
            <person name="Lovell J."/>
            <person name="Martin S."/>
            <person name="Mashreghi-Mohammadi M."/>
            <person name="Maslen G.L."/>
            <person name="Matthews L."/>
            <person name="McCann O.T."/>
            <person name="McLaren S.J."/>
            <person name="McLay K."/>
            <person name="McMurray A."/>
            <person name="Moore M.J.F."/>
            <person name="Mullikin J.C."/>
            <person name="Niblett D."/>
            <person name="Nickerson T."/>
            <person name="Novik K.L."/>
            <person name="Oliver K."/>
            <person name="Overton-Larty E.K."/>
            <person name="Parker A."/>
            <person name="Patel R."/>
            <person name="Pearce A.V."/>
            <person name="Peck A.I."/>
            <person name="Phillimore B.J.C.T."/>
            <person name="Phillips S."/>
            <person name="Plumb R.W."/>
            <person name="Porter K.M."/>
            <person name="Ramsey Y."/>
            <person name="Ranby S.A."/>
            <person name="Rice C.M."/>
            <person name="Ross M.T."/>
            <person name="Searle S.M."/>
            <person name="Sehra H.K."/>
            <person name="Sheridan E."/>
            <person name="Skuce C.D."/>
            <person name="Smith S."/>
            <person name="Smith M."/>
            <person name="Spraggon L."/>
            <person name="Squares S.L."/>
            <person name="Steward C.A."/>
            <person name="Sycamore N."/>
            <person name="Tamlyn-Hall G."/>
            <person name="Tester J."/>
            <person name="Theaker A.J."/>
            <person name="Thomas D.W."/>
            <person name="Thorpe A."/>
            <person name="Tracey A."/>
            <person name="Tromans A."/>
            <person name="Tubby B."/>
            <person name="Wall M."/>
            <person name="Wallis J.M."/>
            <person name="West A.P."/>
            <person name="White S.S."/>
            <person name="Whitehead S.L."/>
            <person name="Whittaker H."/>
            <person name="Wild A."/>
            <person name="Willey D.J."/>
            <person name="Wilmer T.E."/>
            <person name="Wood J.M."/>
            <person name="Wray P.W."/>
            <person name="Wyatt J.C."/>
            <person name="Young L."/>
            <person name="Younger R.M."/>
            <person name="Bentley D.R."/>
            <person name="Coulson A."/>
            <person name="Durbin R.M."/>
            <person name="Hubbard T."/>
            <person name="Sulston J.E."/>
            <person name="Dunham I."/>
            <person name="Rogers J."/>
            <person name="Beck S."/>
        </authorList>
    </citation>
    <scope>NUCLEOTIDE SEQUENCE [LARGE SCALE GENOMIC DNA]</scope>
</reference>
<reference key="4">
    <citation type="submission" date="2005-07" db="EMBL/GenBank/DDBJ databases">
        <authorList>
            <person name="Mural R.J."/>
            <person name="Istrail S."/>
            <person name="Sutton G.G."/>
            <person name="Florea L."/>
            <person name="Halpern A.L."/>
            <person name="Mobarry C.M."/>
            <person name="Lippert R."/>
            <person name="Walenz B."/>
            <person name="Shatkay H."/>
            <person name="Dew I."/>
            <person name="Miller J.R."/>
            <person name="Flanigan M.J."/>
            <person name="Edwards N.J."/>
            <person name="Bolanos R."/>
            <person name="Fasulo D."/>
            <person name="Halldorsson B.V."/>
            <person name="Hannenhalli S."/>
            <person name="Turner R."/>
            <person name="Yooseph S."/>
            <person name="Lu F."/>
            <person name="Nusskern D.R."/>
            <person name="Shue B.C."/>
            <person name="Zheng X.H."/>
            <person name="Zhong F."/>
            <person name="Delcher A.L."/>
            <person name="Huson D.H."/>
            <person name="Kravitz S.A."/>
            <person name="Mouchard L."/>
            <person name="Reinert K."/>
            <person name="Remington K.A."/>
            <person name="Clark A.G."/>
            <person name="Waterman M.S."/>
            <person name="Eichler E.E."/>
            <person name="Adams M.D."/>
            <person name="Hunkapiller M.W."/>
            <person name="Myers E.W."/>
            <person name="Venter J.C."/>
        </authorList>
    </citation>
    <scope>NUCLEOTIDE SEQUENCE [LARGE SCALE GENOMIC DNA]</scope>
</reference>
<reference key="5">
    <citation type="journal article" date="2004" name="Genome Res.">
        <title>The status, quality, and expansion of the NIH full-length cDNA project: the Mammalian Gene Collection (MGC).</title>
        <authorList>
            <consortium name="The MGC Project Team"/>
        </authorList>
    </citation>
    <scope>NUCLEOTIDE SEQUENCE [LARGE SCALE MRNA] (ISOFORMS 1 AND 2)</scope>
    <source>
        <tissue>Brain</tissue>
        <tissue>Skin</tissue>
    </source>
</reference>
<reference key="6">
    <citation type="journal article" date="2012" name="PLoS ONE">
        <title>The dispanins: a novel gene family of ancient origin that contains 14 human members.</title>
        <authorList>
            <person name="Sallman Almen M."/>
            <person name="Bringeland N."/>
            <person name="Fredriksson R."/>
            <person name="Schioth H.B."/>
        </authorList>
    </citation>
    <scope>GENE FAMILY</scope>
</reference>
<reference key="7">
    <citation type="journal article" date="2006" name="Science">
        <title>The consensus coding sequences of human breast and colorectal cancers.</title>
        <authorList>
            <person name="Sjoeblom T."/>
            <person name="Jones S."/>
            <person name="Wood L.D."/>
            <person name="Parsons D.W."/>
            <person name="Lin J."/>
            <person name="Barber T.D."/>
            <person name="Mandelker D."/>
            <person name="Leary R.J."/>
            <person name="Ptak J."/>
            <person name="Silliman N."/>
            <person name="Szabo S."/>
            <person name="Buckhaults P."/>
            <person name="Farrell C."/>
            <person name="Meeh P."/>
            <person name="Markowitz S.D."/>
            <person name="Willis J."/>
            <person name="Dawson D."/>
            <person name="Willson J.K.V."/>
            <person name="Gazdar A.F."/>
            <person name="Hartigan J."/>
            <person name="Wu L."/>
            <person name="Liu C."/>
            <person name="Parmigiani G."/>
            <person name="Park B.H."/>
            <person name="Bachman K.E."/>
            <person name="Papadopoulos N."/>
            <person name="Vogelstein B."/>
            <person name="Kinzler K.W."/>
            <person name="Velculescu V.E."/>
        </authorList>
    </citation>
    <scope>VARIANT [LARGE SCALE ANALYSIS] THR-94</scope>
</reference>
<name>PRRT1_HUMAN</name>
<keyword id="KW-0025">Alternative splicing</keyword>
<keyword id="KW-1003">Cell membrane</keyword>
<keyword id="KW-0472">Membrane</keyword>
<keyword id="KW-1267">Proteomics identification</keyword>
<keyword id="KW-1185">Reference proteome</keyword>
<keyword id="KW-0735">Signal-anchor</keyword>
<keyword id="KW-0770">Synapse</keyword>
<keyword id="KW-0812">Transmembrane</keyword>
<keyword id="KW-1133">Transmembrane helix</keyword>
<protein>
    <recommendedName>
        <fullName>Proline-rich transmembrane protein 1</fullName>
    </recommendedName>
    <alternativeName>
        <fullName>Dispanin subfamily D member 1</fullName>
        <shortName>DSPD1</shortName>
    </alternativeName>
    <alternativeName>
        <fullName evidence="2">Synapse differentiation-induced protein 4</fullName>
        <shortName evidence="2">SynDIG4</shortName>
    </alternativeName>
</protein>